<proteinExistence type="inferred from homology"/>
<feature type="chain" id="PRO_1000065230" description="Regulatory protein RecX">
    <location>
        <begin position="1"/>
        <end position="162"/>
    </location>
</feature>
<organism>
    <name type="scientific">Xanthomonas campestris pv. campestris (strain 8004)</name>
    <dbReference type="NCBI Taxonomy" id="314565"/>
    <lineage>
        <taxon>Bacteria</taxon>
        <taxon>Pseudomonadati</taxon>
        <taxon>Pseudomonadota</taxon>
        <taxon>Gammaproteobacteria</taxon>
        <taxon>Lysobacterales</taxon>
        <taxon>Lysobacteraceae</taxon>
        <taxon>Xanthomonas</taxon>
    </lineage>
</organism>
<name>RECX_XANC8</name>
<evidence type="ECO:0000255" key="1">
    <source>
        <dbReference type="HAMAP-Rule" id="MF_01114"/>
    </source>
</evidence>
<dbReference type="EMBL" id="CP000050">
    <property type="protein sequence ID" value="AAY49558.1"/>
    <property type="molecule type" value="Genomic_DNA"/>
</dbReference>
<dbReference type="RefSeq" id="WP_011036900.1">
    <property type="nucleotide sequence ID" value="NZ_CP155948.1"/>
</dbReference>
<dbReference type="SMR" id="Q4UTR5"/>
<dbReference type="KEGG" id="xcb:XC_2508"/>
<dbReference type="HOGENOM" id="CLU_066607_3_2_6"/>
<dbReference type="Proteomes" id="UP000000420">
    <property type="component" value="Chromosome"/>
</dbReference>
<dbReference type="GO" id="GO:0005737">
    <property type="term" value="C:cytoplasm"/>
    <property type="evidence" value="ECO:0007669"/>
    <property type="project" value="UniProtKB-SubCell"/>
</dbReference>
<dbReference type="GO" id="GO:0006282">
    <property type="term" value="P:regulation of DNA repair"/>
    <property type="evidence" value="ECO:0007669"/>
    <property type="project" value="UniProtKB-UniRule"/>
</dbReference>
<dbReference type="Gene3D" id="1.10.10.10">
    <property type="entry name" value="Winged helix-like DNA-binding domain superfamily/Winged helix DNA-binding domain"/>
    <property type="match status" value="3"/>
</dbReference>
<dbReference type="HAMAP" id="MF_01114">
    <property type="entry name" value="RecX"/>
    <property type="match status" value="1"/>
</dbReference>
<dbReference type="InterPro" id="IPR053926">
    <property type="entry name" value="RecX_HTH_1st"/>
</dbReference>
<dbReference type="InterPro" id="IPR053924">
    <property type="entry name" value="RecX_HTH_2nd"/>
</dbReference>
<dbReference type="InterPro" id="IPR053925">
    <property type="entry name" value="RecX_HTH_3rd"/>
</dbReference>
<dbReference type="InterPro" id="IPR003783">
    <property type="entry name" value="Regulatory_RecX"/>
</dbReference>
<dbReference type="InterPro" id="IPR036388">
    <property type="entry name" value="WH-like_DNA-bd_sf"/>
</dbReference>
<dbReference type="NCBIfam" id="NF001054">
    <property type="entry name" value="PRK00117.2-1"/>
    <property type="match status" value="1"/>
</dbReference>
<dbReference type="PANTHER" id="PTHR33602">
    <property type="entry name" value="REGULATORY PROTEIN RECX FAMILY PROTEIN"/>
    <property type="match status" value="1"/>
</dbReference>
<dbReference type="PANTHER" id="PTHR33602:SF1">
    <property type="entry name" value="REGULATORY PROTEIN RECX FAMILY PROTEIN"/>
    <property type="match status" value="1"/>
</dbReference>
<dbReference type="Pfam" id="PF21982">
    <property type="entry name" value="RecX_HTH1"/>
    <property type="match status" value="1"/>
</dbReference>
<dbReference type="Pfam" id="PF02631">
    <property type="entry name" value="RecX_HTH2"/>
    <property type="match status" value="1"/>
</dbReference>
<dbReference type="Pfam" id="PF21981">
    <property type="entry name" value="RecX_HTH3"/>
    <property type="match status" value="1"/>
</dbReference>
<gene>
    <name evidence="1" type="primary">recX</name>
    <name type="ordered locus">XC_2508</name>
</gene>
<accession>Q4UTR5</accession>
<comment type="function">
    <text evidence="1">Modulates RecA activity.</text>
</comment>
<comment type="subcellular location">
    <subcellularLocation>
        <location evidence="1">Cytoplasm</location>
    </subcellularLocation>
</comment>
<comment type="similarity">
    <text evidence="1">Belongs to the RecX family.</text>
</comment>
<keyword id="KW-0963">Cytoplasm</keyword>
<sequence>MSEQAPAPKRGRRFKEQTPVQRALGLLVRREHSKKELNRKLQARGIEPEAAQAAVERLAGEGWQDDVRFAASVVRNRASSGYGPLHIRAELGTHGLDSDAVSAAMATFEGDWTENALDLIRRRFGEDGPVDLAQRRKAADLLARRGFDGNSIRLATRFDLED</sequence>
<reference key="1">
    <citation type="journal article" date="2005" name="Genome Res.">
        <title>Comparative and functional genomic analyses of the pathogenicity of phytopathogen Xanthomonas campestris pv. campestris.</title>
        <authorList>
            <person name="Qian W."/>
            <person name="Jia Y."/>
            <person name="Ren S.-X."/>
            <person name="He Y.-Q."/>
            <person name="Feng J.-X."/>
            <person name="Lu L.-F."/>
            <person name="Sun Q."/>
            <person name="Ying G."/>
            <person name="Tang D.-J."/>
            <person name="Tang H."/>
            <person name="Wu W."/>
            <person name="Hao P."/>
            <person name="Wang L."/>
            <person name="Jiang B.-L."/>
            <person name="Zeng S."/>
            <person name="Gu W.-Y."/>
            <person name="Lu G."/>
            <person name="Rong L."/>
            <person name="Tian Y."/>
            <person name="Yao Z."/>
            <person name="Fu G."/>
            <person name="Chen B."/>
            <person name="Fang R."/>
            <person name="Qiang B."/>
            <person name="Chen Z."/>
            <person name="Zhao G.-P."/>
            <person name="Tang J.-L."/>
            <person name="He C."/>
        </authorList>
    </citation>
    <scope>NUCLEOTIDE SEQUENCE [LARGE SCALE GENOMIC DNA]</scope>
    <source>
        <strain>8004</strain>
    </source>
</reference>
<protein>
    <recommendedName>
        <fullName evidence="1">Regulatory protein RecX</fullName>
    </recommendedName>
</protein>